<comment type="function">
    <text>Tubulin is the major constituent of microtubules, a cylinder consisting of laterally associated linear protofilaments composed of alpha- and beta-tubulin heterodimers. Microtubules grow by the addition of GTP-tubulin dimers to the microtubule end, where a stabilizing cap forms. Below the cap, tubulin dimers are in GDP-bound state, owing to GTPase activity of alpha-tubulin.</text>
</comment>
<comment type="cofactor">
    <cofactor evidence="2">
        <name>Mg(2+)</name>
        <dbReference type="ChEBI" id="CHEBI:18420"/>
    </cofactor>
</comment>
<comment type="subunit">
    <text>Dimer of alpha and beta chains. A typical microtubule is a hollow water-filled tube with an outer diameter of 25 nm and an inner diameter of 15 nM. Alpha-beta heterodimers associate head-to-tail to form protofilaments running lengthwise along the microtubule wall with the beta-tubulin subunit facing the microtubule plus end conferring a structural polarity. Microtubules usually have 13 protofilaments but different protofilament numbers can be found in some organisms and specialized cells.</text>
</comment>
<comment type="subcellular location">
    <subcellularLocation>
        <location evidence="1">Cytoplasm</location>
        <location evidence="1">Cytoskeleton</location>
    </subcellularLocation>
</comment>
<comment type="similarity">
    <text evidence="4">Belongs to the tubulin family.</text>
</comment>
<keyword id="KW-0963">Cytoplasm</keyword>
<keyword id="KW-0206">Cytoskeleton</keyword>
<keyword id="KW-0342">GTP-binding</keyword>
<keyword id="KW-0460">Magnesium</keyword>
<keyword id="KW-0479">Metal-binding</keyword>
<keyword id="KW-0493">Microtubule</keyword>
<keyword id="KW-0547">Nucleotide-binding</keyword>
<evidence type="ECO:0000250" key="1"/>
<evidence type="ECO:0000250" key="2">
    <source>
        <dbReference type="UniProtKB" id="P68363"/>
    </source>
</evidence>
<evidence type="ECO:0000250" key="3">
    <source>
        <dbReference type="UniProtKB" id="Q13509"/>
    </source>
</evidence>
<evidence type="ECO:0000305" key="4"/>
<dbReference type="EMBL" id="AJ249550">
    <property type="protein sequence ID" value="CAB91642.1"/>
    <property type="molecule type" value="Genomic_DNA"/>
</dbReference>
<dbReference type="SMR" id="Q9NFZ5"/>
<dbReference type="eggNOG" id="KOG1375">
    <property type="taxonomic scope" value="Eukaryota"/>
</dbReference>
<dbReference type="OMA" id="FWEIISQ"/>
<dbReference type="OrthoDB" id="1662883at2759"/>
<dbReference type="GO" id="GO:0005737">
    <property type="term" value="C:cytoplasm"/>
    <property type="evidence" value="ECO:0007669"/>
    <property type="project" value="UniProtKB-KW"/>
</dbReference>
<dbReference type="GO" id="GO:0005874">
    <property type="term" value="C:microtubule"/>
    <property type="evidence" value="ECO:0007669"/>
    <property type="project" value="UniProtKB-KW"/>
</dbReference>
<dbReference type="GO" id="GO:0005525">
    <property type="term" value="F:GTP binding"/>
    <property type="evidence" value="ECO:0007669"/>
    <property type="project" value="UniProtKB-KW"/>
</dbReference>
<dbReference type="GO" id="GO:0003924">
    <property type="term" value="F:GTPase activity"/>
    <property type="evidence" value="ECO:0007669"/>
    <property type="project" value="InterPro"/>
</dbReference>
<dbReference type="GO" id="GO:0046872">
    <property type="term" value="F:metal ion binding"/>
    <property type="evidence" value="ECO:0007669"/>
    <property type="project" value="UniProtKB-KW"/>
</dbReference>
<dbReference type="GO" id="GO:0005200">
    <property type="term" value="F:structural constituent of cytoskeleton"/>
    <property type="evidence" value="ECO:0007669"/>
    <property type="project" value="InterPro"/>
</dbReference>
<dbReference type="GO" id="GO:0007017">
    <property type="term" value="P:microtubule-based process"/>
    <property type="evidence" value="ECO:0007669"/>
    <property type="project" value="InterPro"/>
</dbReference>
<dbReference type="CDD" id="cd02187">
    <property type="entry name" value="beta_tubulin"/>
    <property type="match status" value="1"/>
</dbReference>
<dbReference type="FunFam" id="1.10.287.600:FF:000013">
    <property type="entry name" value="Tubulin beta chain"/>
    <property type="match status" value="1"/>
</dbReference>
<dbReference type="FunFam" id="3.30.1330.20:FF:000009">
    <property type="entry name" value="Tubulin beta chain"/>
    <property type="match status" value="1"/>
</dbReference>
<dbReference type="FunFam" id="3.40.50.1440:FF:000003">
    <property type="entry name" value="Tubulin beta chain"/>
    <property type="match status" value="1"/>
</dbReference>
<dbReference type="Gene3D" id="1.10.287.600">
    <property type="entry name" value="Helix hairpin bin"/>
    <property type="match status" value="1"/>
</dbReference>
<dbReference type="Gene3D" id="3.30.1330.20">
    <property type="entry name" value="Tubulin/FtsZ, C-terminal domain"/>
    <property type="match status" value="1"/>
</dbReference>
<dbReference type="Gene3D" id="3.40.50.1440">
    <property type="entry name" value="Tubulin/FtsZ, GTPase domain"/>
    <property type="match status" value="1"/>
</dbReference>
<dbReference type="InterPro" id="IPR013838">
    <property type="entry name" value="Beta-tubulin_BS"/>
</dbReference>
<dbReference type="InterPro" id="IPR002453">
    <property type="entry name" value="Beta_tubulin"/>
</dbReference>
<dbReference type="InterPro" id="IPR008280">
    <property type="entry name" value="Tub_FtsZ_C"/>
</dbReference>
<dbReference type="InterPro" id="IPR000217">
    <property type="entry name" value="Tubulin"/>
</dbReference>
<dbReference type="InterPro" id="IPR037103">
    <property type="entry name" value="Tubulin/FtsZ-like_C"/>
</dbReference>
<dbReference type="InterPro" id="IPR018316">
    <property type="entry name" value="Tubulin/FtsZ_2-layer-sand-dom"/>
</dbReference>
<dbReference type="InterPro" id="IPR036525">
    <property type="entry name" value="Tubulin/FtsZ_GTPase_sf"/>
</dbReference>
<dbReference type="InterPro" id="IPR023123">
    <property type="entry name" value="Tubulin_C"/>
</dbReference>
<dbReference type="InterPro" id="IPR017975">
    <property type="entry name" value="Tubulin_CS"/>
</dbReference>
<dbReference type="InterPro" id="IPR003008">
    <property type="entry name" value="Tubulin_FtsZ_GTPase"/>
</dbReference>
<dbReference type="PANTHER" id="PTHR11588">
    <property type="entry name" value="TUBULIN"/>
    <property type="match status" value="1"/>
</dbReference>
<dbReference type="Pfam" id="PF00091">
    <property type="entry name" value="Tubulin"/>
    <property type="match status" value="1"/>
</dbReference>
<dbReference type="Pfam" id="PF03953">
    <property type="entry name" value="Tubulin_C"/>
    <property type="match status" value="1"/>
</dbReference>
<dbReference type="PRINTS" id="PR01163">
    <property type="entry name" value="BETATUBULIN"/>
</dbReference>
<dbReference type="PRINTS" id="PR01161">
    <property type="entry name" value="TUBULIN"/>
</dbReference>
<dbReference type="SMART" id="SM00864">
    <property type="entry name" value="Tubulin"/>
    <property type="match status" value="1"/>
</dbReference>
<dbReference type="SMART" id="SM00865">
    <property type="entry name" value="Tubulin_C"/>
    <property type="match status" value="1"/>
</dbReference>
<dbReference type="SUPFAM" id="SSF55307">
    <property type="entry name" value="Tubulin C-terminal domain-like"/>
    <property type="match status" value="1"/>
</dbReference>
<dbReference type="SUPFAM" id="SSF52490">
    <property type="entry name" value="Tubulin nucleotide-binding domain-like"/>
    <property type="match status" value="1"/>
</dbReference>
<dbReference type="PROSITE" id="PS00227">
    <property type="entry name" value="TUBULIN"/>
    <property type="match status" value="1"/>
</dbReference>
<dbReference type="PROSITE" id="PS00228">
    <property type="entry name" value="TUBULIN_B_AUTOREG"/>
    <property type="match status" value="1"/>
</dbReference>
<organism>
    <name type="scientific">Echinococcus multilocularis</name>
    <name type="common">Fox tapeworm</name>
    <dbReference type="NCBI Taxonomy" id="6211"/>
    <lineage>
        <taxon>Eukaryota</taxon>
        <taxon>Metazoa</taxon>
        <taxon>Spiralia</taxon>
        <taxon>Lophotrochozoa</taxon>
        <taxon>Platyhelminthes</taxon>
        <taxon>Cestoda</taxon>
        <taxon>Eucestoda</taxon>
        <taxon>Cyclophyllidea</taxon>
        <taxon>Taeniidae</taxon>
        <taxon>Echinococcus</taxon>
    </lineage>
</organism>
<reference key="1">
    <citation type="journal article" date="2000" name="Mol. Biochem. Parasitol.">
        <title>Cloning and characterization of beta-tubulin genes from Echinococcus multilocularis.</title>
        <authorList>
            <person name="Brehm K."/>
            <person name="Kronthaler K."/>
            <person name="Jura H."/>
            <person name="Frosch M."/>
        </authorList>
    </citation>
    <scope>NUCLEOTIDE SEQUENCE [GENOMIC DNA]</scope>
    <source>
        <strain>H-95</strain>
    </source>
</reference>
<accession>Q9NFZ5</accession>
<gene>
    <name type="primary">TUB-3</name>
</gene>
<proteinExistence type="inferred from homology"/>
<protein>
    <recommendedName>
        <fullName>Tubulin beta-3 chain</fullName>
    </recommendedName>
    <alternativeName>
        <fullName>Beta-3-tubulin</fullName>
    </alternativeName>
</protein>
<sequence>MRELVHMQAGQCGNQIGSKFWETISQEHGIDEMGSYHGDSDLQLERINVYYNEGQGGKYVPRALLIDLEPGTMDSVRSGPLGKLFRPDNFIFGQSGAGNNWAKGHYTEGAELIEEVLDVVRKECEACDCLQGFQLCHSLGGGTGSGMGTLLIAKIREEYPDRIMTSFSVVPSPKVSDTVVEPYNATLSVHQLVESTDETFCIDNEALYDICFRTLKLPNPNYSDLNHLVSLTMSGVTTSLRFPGQLNSDLRKLAVNMVPFPRLHFFVPGFAPLASRTSQSYQSCTILELTRQMFDAKNMMAACDPSHGRYLTVAAMYRGRVSMKEVEDRILETQTRNSTYFVEWIPNNVKTAVCDIPPIDFKVAGTFIGNTTAIQELFTRVSDQFSAMFRRRAFLHFFTSEGMDEMEFSEAESNMNDLISEYQQYQEVGIDDDYGEEEAAPEE</sequence>
<name>TBB3_ECHMU</name>
<feature type="chain" id="PRO_0000048292" description="Tubulin beta-3 chain">
    <location>
        <begin position="1"/>
        <end position="443"/>
    </location>
</feature>
<feature type="binding site" evidence="3">
    <location>
        <position position="11"/>
    </location>
    <ligand>
        <name>GTP</name>
        <dbReference type="ChEBI" id="CHEBI:37565"/>
    </ligand>
</feature>
<feature type="binding site" evidence="2">
    <location>
        <position position="69"/>
    </location>
    <ligand>
        <name>GTP</name>
        <dbReference type="ChEBI" id="CHEBI:37565"/>
    </ligand>
</feature>
<feature type="binding site" evidence="2">
    <location>
        <position position="69"/>
    </location>
    <ligand>
        <name>Mg(2+)</name>
        <dbReference type="ChEBI" id="CHEBI:18420"/>
    </ligand>
</feature>
<feature type="binding site" evidence="3">
    <location>
        <position position="138"/>
    </location>
    <ligand>
        <name>GTP</name>
        <dbReference type="ChEBI" id="CHEBI:37565"/>
    </ligand>
</feature>
<feature type="binding site" evidence="3">
    <location>
        <position position="142"/>
    </location>
    <ligand>
        <name>GTP</name>
        <dbReference type="ChEBI" id="CHEBI:37565"/>
    </ligand>
</feature>
<feature type="binding site" evidence="3">
    <location>
        <position position="143"/>
    </location>
    <ligand>
        <name>GTP</name>
        <dbReference type="ChEBI" id="CHEBI:37565"/>
    </ligand>
</feature>
<feature type="binding site" evidence="3">
    <location>
        <position position="144"/>
    </location>
    <ligand>
        <name>GTP</name>
        <dbReference type="ChEBI" id="CHEBI:37565"/>
    </ligand>
</feature>
<feature type="binding site" evidence="3">
    <location>
        <position position="204"/>
    </location>
    <ligand>
        <name>GTP</name>
        <dbReference type="ChEBI" id="CHEBI:37565"/>
    </ligand>
</feature>
<feature type="binding site" evidence="3">
    <location>
        <position position="226"/>
    </location>
    <ligand>
        <name>GTP</name>
        <dbReference type="ChEBI" id="CHEBI:37565"/>
    </ligand>
</feature>